<feature type="chain" id="PRO_0000099220" description="39kDa core protein OPG130">
    <location>
        <begin position="1"/>
        <end position="271"/>
    </location>
</feature>
<feature type="region of interest" description="Disordered" evidence="2">
    <location>
        <begin position="80"/>
        <end position="101"/>
    </location>
</feature>
<feature type="region of interest" description="Disordered" evidence="2">
    <location>
        <begin position="140"/>
        <end position="180"/>
    </location>
</feature>
<feature type="compositionally biased region" description="Polar residues" evidence="2">
    <location>
        <begin position="92"/>
        <end position="101"/>
    </location>
</feature>
<feature type="compositionally biased region" description="Low complexity" evidence="2">
    <location>
        <begin position="144"/>
        <end position="165"/>
    </location>
</feature>
<comment type="function">
    <text evidence="1">Component of the virion core. Participates in virion assembly.</text>
</comment>
<comment type="subunit">
    <text evidence="1">Interacts with OPG136 and its cleaved form.</text>
</comment>
<comment type="subcellular location">
    <subcellularLocation>
        <location evidence="1">Virion</location>
    </subcellularLocation>
    <subcellularLocation>
        <location evidence="1">Host endoplasmic reticulum-Golgi intermediate compartment membrane</location>
    </subcellularLocation>
    <text evidence="1">Localizes between the core and the membrane; might surround the outer core wall like a palisade (spikes).</text>
</comment>
<comment type="induction">
    <text>Expressed in the late phase of the viral replicative cycle.</text>
</comment>
<comment type="PTM">
    <text evidence="1">Its phosphorylation state is regulated by the OPG054 kinase and the OPG106 phosphatase.</text>
</comment>
<comment type="similarity">
    <text evidence="3">Belongs to the orthopoxvirus OPG130 family.</text>
</comment>
<name>PG130_VAR67</name>
<organismHost>
    <name type="scientific">Homo sapiens</name>
    <name type="common">Human</name>
    <dbReference type="NCBI Taxonomy" id="9606"/>
</organismHost>
<sequence length="271" mass="30060">MDFFNKFSQGLAESSTPKSSIYYSEEKDLDIKKDEAIEIGLKSQESYYQRQLREQLARDNMMAASRQPIQPLQPTIHITPLQVPTPAPTPKPRQQQTNTSSDMSNLFDWLSADDNTQPSSLLPALTPINAVQDIISKFNKDQKTTTTPSTQPSQTLPTTTCTQQSDGSISCTTPTVTPPQPPIVATVCTPTPTGGTVCTTAQQNPNPGATSQQNLDNMALKDLMSSVEKDMRQLQAETNDLVTNVYDAREYTRRAIDQILQLVKGFERFQK</sequence>
<reference key="1">
    <citation type="journal article" date="1991" name="Dokl. Akad. Nauk SSSR">
        <title>Creation of a clone library of fragments from the natural variola virus and study of the structural and functional organization of viral genes from a circle of hosts.</title>
        <authorList>
            <person name="Shchelkunov S.N."/>
            <person name="Marennikova S.S."/>
            <person name="Totmenin A.V."/>
            <person name="Blinov V.M."/>
            <person name="Chizhikov V.E."/>
            <person name="Gutorov V.V."/>
            <person name="Safronov P.F."/>
            <person name="Pozdnyakov S.G."/>
            <person name="Shelukhina E.M."/>
            <person name="Gashnikov P.V."/>
            <person name="Anjaparidze O.G."/>
            <person name="Sandakhchiev L.S."/>
        </authorList>
    </citation>
    <scope>NUCLEOTIDE SEQUENCE [GENOMIC DNA]</scope>
</reference>
<reference key="2">
    <citation type="journal article" date="1993" name="FEBS Lett.">
        <title>Genes of variola and vaccinia viruses necessary to overcome the host protective mechanisms.</title>
        <authorList>
            <person name="Shchelkunov S.N."/>
            <person name="Blinov V.M."/>
            <person name="Sandakhchiev L.S."/>
        </authorList>
    </citation>
    <scope>NUCLEOTIDE SEQUENCE [LARGE SCALE GENOMIC DNA]</scope>
</reference>
<accession>P0DOP1</accession>
<accession>P33832</accession>
<protein>
    <recommendedName>
        <fullName>39kDa core protein OPG130</fullName>
        <shortName>p39</shortName>
    </recommendedName>
    <alternativeName>
        <fullName>Protein A4</fullName>
    </alternativeName>
</protein>
<proteinExistence type="evidence at transcript level"/>
<evidence type="ECO:0000250" key="1">
    <source>
        <dbReference type="UniProtKB" id="P29191"/>
    </source>
</evidence>
<evidence type="ECO:0000256" key="2">
    <source>
        <dbReference type="SAM" id="MobiDB-lite"/>
    </source>
</evidence>
<evidence type="ECO:0000305" key="3"/>
<keyword id="KW-1043">Host membrane</keyword>
<keyword id="KW-0426">Late protein</keyword>
<keyword id="KW-0472">Membrane</keyword>
<keyword id="KW-1185">Reference proteome</keyword>
<keyword id="KW-0946">Virion</keyword>
<dbReference type="EMBL" id="X69198">
    <property type="protein sequence ID" value="CAA49049.1"/>
    <property type="molecule type" value="Genomic_DNA"/>
</dbReference>
<dbReference type="EMBL" id="X67116">
    <property type="protein sequence ID" value="CAA47513.1"/>
    <property type="molecule type" value="Genomic_DNA"/>
</dbReference>
<dbReference type="PIR" id="E36848">
    <property type="entry name" value="E36848"/>
</dbReference>
<dbReference type="RefSeq" id="NP_042152.1">
    <property type="nucleotide sequence ID" value="NC_001611.1"/>
</dbReference>
<dbReference type="SMR" id="P0DOP1"/>
<dbReference type="GeneID" id="1486531"/>
<dbReference type="KEGG" id="vg:1486531"/>
<dbReference type="Proteomes" id="UP000002060">
    <property type="component" value="Segment"/>
</dbReference>
<dbReference type="GO" id="GO:0044173">
    <property type="term" value="C:host cell endoplasmic reticulum-Golgi intermediate compartment membrane"/>
    <property type="evidence" value="ECO:0007669"/>
    <property type="project" value="UniProtKB-SubCell"/>
</dbReference>
<dbReference type="GO" id="GO:0016020">
    <property type="term" value="C:membrane"/>
    <property type="evidence" value="ECO:0007669"/>
    <property type="project" value="UniProtKB-KW"/>
</dbReference>
<dbReference type="GO" id="GO:0044423">
    <property type="term" value="C:virion component"/>
    <property type="evidence" value="ECO:0007669"/>
    <property type="project" value="UniProtKB-KW"/>
</dbReference>
<dbReference type="InterPro" id="IPR010396">
    <property type="entry name" value="Poxvirus_A4L"/>
</dbReference>
<dbReference type="Pfam" id="PF06193">
    <property type="entry name" value="Orthopox_A5L"/>
    <property type="match status" value="1"/>
</dbReference>
<gene>
    <name type="primary">OPG130</name>
    <name type="ORF">A4L</name>
</gene>
<organism>
    <name type="scientific">Variola virus (isolate Human/India/Ind3/1967)</name>
    <name type="common">VARV</name>
    <name type="synonym">Smallpox virus</name>
    <dbReference type="NCBI Taxonomy" id="587200"/>
    <lineage>
        <taxon>Viruses</taxon>
        <taxon>Varidnaviria</taxon>
        <taxon>Bamfordvirae</taxon>
        <taxon>Nucleocytoviricota</taxon>
        <taxon>Pokkesviricetes</taxon>
        <taxon>Chitovirales</taxon>
        <taxon>Poxviridae</taxon>
        <taxon>Chordopoxvirinae</taxon>
        <taxon>Orthopoxvirus</taxon>
        <taxon>Variola virus</taxon>
    </lineage>
</organism>